<sequence length="581" mass="63657">MSHSDYNFDIEQNAFEKEAPKVSIERKGDVVEEEVIATGEVENYAEPKSRNFLQRFFDDFKPALTTRGDGVALKRKLTSRHMQMISVGGAIGSGLYVGSGSAFADGGPASVIINYILIGIMMIFVIYALGELAIAYPVAGSFNTYATRFIDPAWGFAVSWNYFLNYFVTCPLELTTCAITFKFWTEINSAAWISIFLAVVIVINLFGVRAYGEVEFILSTIKVIATVGFIILAIIINCGGVPTDHRGYIGGSIIKQKPFRHGFKGFCSVFTTAAFSFSGTEIIGLAAAEVGNPRKSVPSAVKQVFWRIAIFYVVSLILIGLLVSPDDPRLMGNGDVSVSPFVLAIQEANIKGLPSVFNAVIIISVVSVTNSTTYTAARTLQGMATLKQAPKFFSYTDRVGRPLIAMVVVLLFGFFAYINEADKNGSDISDTVFDWLLAISGLSSFFTWGSICLSHIMFRLAFKKQGHSLKELGFVSPMGIWGSVIGLGFNILCLMAEFYVSLFLIGGSPNANDFFQGYLAACIALAFFIGYKIYDRSHIPSLDKLDIDTGLKTYDNQDEEKEEYSSKGPLNILKKAWNAVC</sequence>
<evidence type="ECO:0000255" key="1"/>
<evidence type="ECO:0000305" key="2"/>
<keyword id="KW-0029">Amino-acid transport</keyword>
<keyword id="KW-0472">Membrane</keyword>
<keyword id="KW-1185">Reference proteome</keyword>
<keyword id="KW-0812">Transmembrane</keyword>
<keyword id="KW-1133">Transmembrane helix</keyword>
<keyword id="KW-0813">Transport</keyword>
<protein>
    <recommendedName>
        <fullName>Uncharacterized amino-acid permease C359.01</fullName>
    </recommendedName>
</protein>
<name>YH81_SCHPO</name>
<proteinExistence type="inferred from homology"/>
<reference key="1">
    <citation type="journal article" date="2002" name="Nature">
        <title>The genome sequence of Schizosaccharomyces pombe.</title>
        <authorList>
            <person name="Wood V."/>
            <person name="Gwilliam R."/>
            <person name="Rajandream M.A."/>
            <person name="Lyne M.H."/>
            <person name="Lyne R."/>
            <person name="Stewart A."/>
            <person name="Sgouros J.G."/>
            <person name="Peat N."/>
            <person name="Hayles J."/>
            <person name="Baker S.G."/>
            <person name="Basham D."/>
            <person name="Bowman S."/>
            <person name="Brooks K."/>
            <person name="Brown D."/>
            <person name="Brown S."/>
            <person name="Chillingworth T."/>
            <person name="Churcher C.M."/>
            <person name="Collins M."/>
            <person name="Connor R."/>
            <person name="Cronin A."/>
            <person name="Davis P."/>
            <person name="Feltwell T."/>
            <person name="Fraser A."/>
            <person name="Gentles S."/>
            <person name="Goble A."/>
            <person name="Hamlin N."/>
            <person name="Harris D.E."/>
            <person name="Hidalgo J."/>
            <person name="Hodgson G."/>
            <person name="Holroyd S."/>
            <person name="Hornsby T."/>
            <person name="Howarth S."/>
            <person name="Huckle E.J."/>
            <person name="Hunt S."/>
            <person name="Jagels K."/>
            <person name="James K.D."/>
            <person name="Jones L."/>
            <person name="Jones M."/>
            <person name="Leather S."/>
            <person name="McDonald S."/>
            <person name="McLean J."/>
            <person name="Mooney P."/>
            <person name="Moule S."/>
            <person name="Mungall K.L."/>
            <person name="Murphy L.D."/>
            <person name="Niblett D."/>
            <person name="Odell C."/>
            <person name="Oliver K."/>
            <person name="O'Neil S."/>
            <person name="Pearson D."/>
            <person name="Quail M.A."/>
            <person name="Rabbinowitsch E."/>
            <person name="Rutherford K.M."/>
            <person name="Rutter S."/>
            <person name="Saunders D."/>
            <person name="Seeger K."/>
            <person name="Sharp S."/>
            <person name="Skelton J."/>
            <person name="Simmonds M.N."/>
            <person name="Squares R."/>
            <person name="Squares S."/>
            <person name="Stevens K."/>
            <person name="Taylor K."/>
            <person name="Taylor R.G."/>
            <person name="Tivey A."/>
            <person name="Walsh S.V."/>
            <person name="Warren T."/>
            <person name="Whitehead S."/>
            <person name="Woodward J.R."/>
            <person name="Volckaert G."/>
            <person name="Aert R."/>
            <person name="Robben J."/>
            <person name="Grymonprez B."/>
            <person name="Weltjens I."/>
            <person name="Vanstreels E."/>
            <person name="Rieger M."/>
            <person name="Schaefer M."/>
            <person name="Mueller-Auer S."/>
            <person name="Gabel C."/>
            <person name="Fuchs M."/>
            <person name="Duesterhoeft A."/>
            <person name="Fritzc C."/>
            <person name="Holzer E."/>
            <person name="Moestl D."/>
            <person name="Hilbert H."/>
            <person name="Borzym K."/>
            <person name="Langer I."/>
            <person name="Beck A."/>
            <person name="Lehrach H."/>
            <person name="Reinhardt R."/>
            <person name="Pohl T.M."/>
            <person name="Eger P."/>
            <person name="Zimmermann W."/>
            <person name="Wedler H."/>
            <person name="Wambutt R."/>
            <person name="Purnelle B."/>
            <person name="Goffeau A."/>
            <person name="Cadieu E."/>
            <person name="Dreano S."/>
            <person name="Gloux S."/>
            <person name="Lelaure V."/>
            <person name="Mottier S."/>
            <person name="Galibert F."/>
            <person name="Aves S.J."/>
            <person name="Xiang Z."/>
            <person name="Hunt C."/>
            <person name="Moore K."/>
            <person name="Hurst S.M."/>
            <person name="Lucas M."/>
            <person name="Rochet M."/>
            <person name="Gaillardin C."/>
            <person name="Tallada V.A."/>
            <person name="Garzon A."/>
            <person name="Thode G."/>
            <person name="Daga R.R."/>
            <person name="Cruzado L."/>
            <person name="Jimenez J."/>
            <person name="Sanchez M."/>
            <person name="del Rey F."/>
            <person name="Benito J."/>
            <person name="Dominguez A."/>
            <person name="Revuelta J.L."/>
            <person name="Moreno S."/>
            <person name="Armstrong J."/>
            <person name="Forsburg S.L."/>
            <person name="Cerutti L."/>
            <person name="Lowe T."/>
            <person name="McCombie W.R."/>
            <person name="Paulsen I."/>
            <person name="Potashkin J."/>
            <person name="Shpakovski G.V."/>
            <person name="Ussery D."/>
            <person name="Barrell B.G."/>
            <person name="Nurse P."/>
        </authorList>
    </citation>
    <scope>NUCLEOTIDE SEQUENCE [LARGE SCALE GENOMIC DNA]</scope>
    <source>
        <strain>972 / ATCC 24843</strain>
    </source>
</reference>
<comment type="subcellular location">
    <subcellularLocation>
        <location evidence="2">Membrane</location>
        <topology evidence="2">Multi-pass membrane protein</topology>
    </subcellularLocation>
</comment>
<comment type="similarity">
    <text evidence="2">Belongs to the amino acid-polyamine-organocation (APC) superfamily.</text>
</comment>
<gene>
    <name type="ORF">SPBC359.01</name>
    <name type="ORF">SPBPB10D8.08</name>
</gene>
<dbReference type="EMBL" id="CU329671">
    <property type="protein sequence ID" value="CAC36917.2"/>
    <property type="molecule type" value="Genomic_DNA"/>
</dbReference>
<dbReference type="RefSeq" id="NP_595051.2">
    <property type="nucleotide sequence ID" value="NM_001020956.3"/>
</dbReference>
<dbReference type="SMR" id="Q9P5N4"/>
<dbReference type="BioGRID" id="277439">
    <property type="interactions" value="4"/>
</dbReference>
<dbReference type="FunCoup" id="Q9P5N4">
    <property type="interactions" value="309"/>
</dbReference>
<dbReference type="STRING" id="284812.Q9P5N4"/>
<dbReference type="iPTMnet" id="Q9P5N4"/>
<dbReference type="PaxDb" id="4896-SPBC359.01.1"/>
<dbReference type="EnsemblFungi" id="SPBC359.01.1">
    <property type="protein sequence ID" value="SPBC359.01.1:pep"/>
    <property type="gene ID" value="SPBC359.01"/>
</dbReference>
<dbReference type="KEGG" id="spo:2540923"/>
<dbReference type="PomBase" id="SPBC359.01"/>
<dbReference type="VEuPathDB" id="FungiDB:SPBC359.01"/>
<dbReference type="eggNOG" id="KOG1286">
    <property type="taxonomic scope" value="Eukaryota"/>
</dbReference>
<dbReference type="HOGENOM" id="CLU_007946_12_0_1"/>
<dbReference type="InParanoid" id="Q9P5N4"/>
<dbReference type="PhylomeDB" id="Q9P5N4"/>
<dbReference type="PRO" id="PR:Q9P5N4"/>
<dbReference type="Proteomes" id="UP000002485">
    <property type="component" value="Chromosome II"/>
</dbReference>
<dbReference type="GO" id="GO:0016020">
    <property type="term" value="C:membrane"/>
    <property type="evidence" value="ECO:0000318"/>
    <property type="project" value="GO_Central"/>
</dbReference>
<dbReference type="GO" id="GO:0015171">
    <property type="term" value="F:amino acid transmembrane transporter activity"/>
    <property type="evidence" value="ECO:0000318"/>
    <property type="project" value="GO_Central"/>
</dbReference>
<dbReference type="GO" id="GO:0003333">
    <property type="term" value="P:amino acid transmembrane transport"/>
    <property type="evidence" value="ECO:0000318"/>
    <property type="project" value="GO_Central"/>
</dbReference>
<dbReference type="FunFam" id="1.20.1740.10:FF:000017">
    <property type="entry name" value="Amino acid permease"/>
    <property type="match status" value="1"/>
</dbReference>
<dbReference type="Gene3D" id="1.20.1740.10">
    <property type="entry name" value="Amino acid/polyamine transporter I"/>
    <property type="match status" value="1"/>
</dbReference>
<dbReference type="InterPro" id="IPR004841">
    <property type="entry name" value="AA-permease/SLC12A_dom"/>
</dbReference>
<dbReference type="InterPro" id="IPR004840">
    <property type="entry name" value="Amino_acid_permease_CS"/>
</dbReference>
<dbReference type="InterPro" id="IPR050524">
    <property type="entry name" value="APC_YAT"/>
</dbReference>
<dbReference type="PANTHER" id="PTHR43341">
    <property type="entry name" value="AMINO ACID PERMEASE"/>
    <property type="match status" value="1"/>
</dbReference>
<dbReference type="PANTHER" id="PTHR43341:SF1">
    <property type="entry name" value="GENERAL AMINO-ACID PERMEASE GAP1"/>
    <property type="match status" value="1"/>
</dbReference>
<dbReference type="Pfam" id="PF00324">
    <property type="entry name" value="AA_permease"/>
    <property type="match status" value="1"/>
</dbReference>
<dbReference type="PIRSF" id="PIRSF006060">
    <property type="entry name" value="AA_transporter"/>
    <property type="match status" value="1"/>
</dbReference>
<dbReference type="PROSITE" id="PS00218">
    <property type="entry name" value="AMINO_ACID_PERMEASE_1"/>
    <property type="match status" value="1"/>
</dbReference>
<feature type="chain" id="PRO_0000054172" description="Uncharacterized amino-acid permease C359.01">
    <location>
        <begin position="1"/>
        <end position="581"/>
    </location>
</feature>
<feature type="transmembrane region" description="Helical" evidence="1">
    <location>
        <begin position="84"/>
        <end position="104"/>
    </location>
</feature>
<feature type="transmembrane region" description="Helical" evidence="1">
    <location>
        <begin position="109"/>
        <end position="129"/>
    </location>
</feature>
<feature type="transmembrane region" description="Helical" evidence="1">
    <location>
        <begin position="149"/>
        <end position="169"/>
    </location>
</feature>
<feature type="transmembrane region" description="Helical" evidence="1">
    <location>
        <begin position="187"/>
        <end position="207"/>
    </location>
</feature>
<feature type="transmembrane region" description="Helical" evidence="1">
    <location>
        <begin position="216"/>
        <end position="236"/>
    </location>
</feature>
<feature type="transmembrane region" description="Helical" evidence="1">
    <location>
        <begin position="266"/>
        <end position="286"/>
    </location>
</feature>
<feature type="transmembrane region" description="Helical" evidence="1">
    <location>
        <begin position="304"/>
        <end position="324"/>
    </location>
</feature>
<feature type="transmembrane region" description="Helical" evidence="1">
    <location>
        <begin position="348"/>
        <end position="368"/>
    </location>
</feature>
<feature type="transmembrane region" description="Helical" evidence="1">
    <location>
        <begin position="399"/>
        <end position="419"/>
    </location>
</feature>
<feature type="transmembrane region" description="Helical" evidence="1">
    <location>
        <begin position="432"/>
        <end position="452"/>
    </location>
</feature>
<feature type="transmembrane region" description="Helical" evidence="1">
    <location>
        <begin position="485"/>
        <end position="505"/>
    </location>
</feature>
<feature type="transmembrane region" description="Helical" evidence="1">
    <location>
        <begin position="514"/>
        <end position="534"/>
    </location>
</feature>
<accession>Q9P5N4</accession>
<accession>Q9C0V6</accession>
<organism>
    <name type="scientific">Schizosaccharomyces pombe (strain 972 / ATCC 24843)</name>
    <name type="common">Fission yeast</name>
    <dbReference type="NCBI Taxonomy" id="284812"/>
    <lineage>
        <taxon>Eukaryota</taxon>
        <taxon>Fungi</taxon>
        <taxon>Dikarya</taxon>
        <taxon>Ascomycota</taxon>
        <taxon>Taphrinomycotina</taxon>
        <taxon>Schizosaccharomycetes</taxon>
        <taxon>Schizosaccharomycetales</taxon>
        <taxon>Schizosaccharomycetaceae</taxon>
        <taxon>Schizosaccharomyces</taxon>
    </lineage>
</organism>